<reference key="1">
    <citation type="journal article" date="1999" name="Nature">
        <title>Sequence and analysis of chromosome 4 of the plant Arabidopsis thaliana.</title>
        <authorList>
            <person name="Mayer K.F.X."/>
            <person name="Schueller C."/>
            <person name="Wambutt R."/>
            <person name="Murphy G."/>
            <person name="Volckaert G."/>
            <person name="Pohl T."/>
            <person name="Duesterhoeft A."/>
            <person name="Stiekema W."/>
            <person name="Entian K.-D."/>
            <person name="Terryn N."/>
            <person name="Harris B."/>
            <person name="Ansorge W."/>
            <person name="Brandt P."/>
            <person name="Grivell L.A."/>
            <person name="Rieger M."/>
            <person name="Weichselgartner M."/>
            <person name="de Simone V."/>
            <person name="Obermaier B."/>
            <person name="Mache R."/>
            <person name="Mueller M."/>
            <person name="Kreis M."/>
            <person name="Delseny M."/>
            <person name="Puigdomenech P."/>
            <person name="Watson M."/>
            <person name="Schmidtheini T."/>
            <person name="Reichert B."/>
            <person name="Portetelle D."/>
            <person name="Perez-Alonso M."/>
            <person name="Boutry M."/>
            <person name="Bancroft I."/>
            <person name="Vos P."/>
            <person name="Hoheisel J."/>
            <person name="Zimmermann W."/>
            <person name="Wedler H."/>
            <person name="Ridley P."/>
            <person name="Langham S.-A."/>
            <person name="McCullagh B."/>
            <person name="Bilham L."/>
            <person name="Robben J."/>
            <person name="van der Schueren J."/>
            <person name="Grymonprez B."/>
            <person name="Chuang Y.-J."/>
            <person name="Vandenbussche F."/>
            <person name="Braeken M."/>
            <person name="Weltjens I."/>
            <person name="Voet M."/>
            <person name="Bastiaens I."/>
            <person name="Aert R."/>
            <person name="Defoor E."/>
            <person name="Weitzenegger T."/>
            <person name="Bothe G."/>
            <person name="Ramsperger U."/>
            <person name="Hilbert H."/>
            <person name="Braun M."/>
            <person name="Holzer E."/>
            <person name="Brandt A."/>
            <person name="Peters S."/>
            <person name="van Staveren M."/>
            <person name="Dirkse W."/>
            <person name="Mooijman P."/>
            <person name="Klein Lankhorst R."/>
            <person name="Rose M."/>
            <person name="Hauf J."/>
            <person name="Koetter P."/>
            <person name="Berneiser S."/>
            <person name="Hempel S."/>
            <person name="Feldpausch M."/>
            <person name="Lamberth S."/>
            <person name="Van den Daele H."/>
            <person name="De Keyser A."/>
            <person name="Buysshaert C."/>
            <person name="Gielen J."/>
            <person name="Villarroel R."/>
            <person name="De Clercq R."/>
            <person name="van Montagu M."/>
            <person name="Rogers J."/>
            <person name="Cronin A."/>
            <person name="Quail M.A."/>
            <person name="Bray-Allen S."/>
            <person name="Clark L."/>
            <person name="Doggett J."/>
            <person name="Hall S."/>
            <person name="Kay M."/>
            <person name="Lennard N."/>
            <person name="McLay K."/>
            <person name="Mayes R."/>
            <person name="Pettett A."/>
            <person name="Rajandream M.A."/>
            <person name="Lyne M."/>
            <person name="Benes V."/>
            <person name="Rechmann S."/>
            <person name="Borkova D."/>
            <person name="Bloecker H."/>
            <person name="Scharfe M."/>
            <person name="Grimm M."/>
            <person name="Loehnert T.-H."/>
            <person name="Dose S."/>
            <person name="de Haan M."/>
            <person name="Maarse A.C."/>
            <person name="Schaefer M."/>
            <person name="Mueller-Auer S."/>
            <person name="Gabel C."/>
            <person name="Fuchs M."/>
            <person name="Fartmann B."/>
            <person name="Granderath K."/>
            <person name="Dauner D."/>
            <person name="Herzl A."/>
            <person name="Neumann S."/>
            <person name="Argiriou A."/>
            <person name="Vitale D."/>
            <person name="Liguori R."/>
            <person name="Piravandi E."/>
            <person name="Massenet O."/>
            <person name="Quigley F."/>
            <person name="Clabauld G."/>
            <person name="Muendlein A."/>
            <person name="Felber R."/>
            <person name="Schnabl S."/>
            <person name="Hiller R."/>
            <person name="Schmidt W."/>
            <person name="Lecharny A."/>
            <person name="Aubourg S."/>
            <person name="Chefdor F."/>
            <person name="Cooke R."/>
            <person name="Berger C."/>
            <person name="Monfort A."/>
            <person name="Casacuberta E."/>
            <person name="Gibbons T."/>
            <person name="Weber N."/>
            <person name="Vandenbol M."/>
            <person name="Bargues M."/>
            <person name="Terol J."/>
            <person name="Torres A."/>
            <person name="Perez-Perez A."/>
            <person name="Purnelle B."/>
            <person name="Bent E."/>
            <person name="Johnson S."/>
            <person name="Tacon D."/>
            <person name="Jesse T."/>
            <person name="Heijnen L."/>
            <person name="Schwarz S."/>
            <person name="Scholler P."/>
            <person name="Heber S."/>
            <person name="Francs P."/>
            <person name="Bielke C."/>
            <person name="Frishman D."/>
            <person name="Haase D."/>
            <person name="Lemcke K."/>
            <person name="Mewes H.-W."/>
            <person name="Stocker S."/>
            <person name="Zaccaria P."/>
            <person name="Bevan M."/>
            <person name="Wilson R.K."/>
            <person name="de la Bastide M."/>
            <person name="Habermann K."/>
            <person name="Parnell L."/>
            <person name="Dedhia N."/>
            <person name="Gnoj L."/>
            <person name="Schutz K."/>
            <person name="Huang E."/>
            <person name="Spiegel L."/>
            <person name="Sekhon M."/>
            <person name="Murray J."/>
            <person name="Sheet P."/>
            <person name="Cordes M."/>
            <person name="Abu-Threideh J."/>
            <person name="Stoneking T."/>
            <person name="Kalicki J."/>
            <person name="Graves T."/>
            <person name="Harmon G."/>
            <person name="Edwards J."/>
            <person name="Latreille P."/>
            <person name="Courtney L."/>
            <person name="Cloud J."/>
            <person name="Abbott A."/>
            <person name="Scott K."/>
            <person name="Johnson D."/>
            <person name="Minx P."/>
            <person name="Bentley D."/>
            <person name="Fulton B."/>
            <person name="Miller N."/>
            <person name="Greco T."/>
            <person name="Kemp K."/>
            <person name="Kramer J."/>
            <person name="Fulton L."/>
            <person name="Mardis E."/>
            <person name="Dante M."/>
            <person name="Pepin K."/>
            <person name="Hillier L.W."/>
            <person name="Nelson J."/>
            <person name="Spieth J."/>
            <person name="Ryan E."/>
            <person name="Andrews S."/>
            <person name="Geisel C."/>
            <person name="Layman D."/>
            <person name="Du H."/>
            <person name="Ali J."/>
            <person name="Berghoff A."/>
            <person name="Jones K."/>
            <person name="Drone K."/>
            <person name="Cotton M."/>
            <person name="Joshu C."/>
            <person name="Antonoiu B."/>
            <person name="Zidanic M."/>
            <person name="Strong C."/>
            <person name="Sun H."/>
            <person name="Lamar B."/>
            <person name="Yordan C."/>
            <person name="Ma P."/>
            <person name="Zhong J."/>
            <person name="Preston R."/>
            <person name="Vil D."/>
            <person name="Shekher M."/>
            <person name="Matero A."/>
            <person name="Shah R."/>
            <person name="Swaby I.K."/>
            <person name="O'Shaughnessy A."/>
            <person name="Rodriguez M."/>
            <person name="Hoffman J."/>
            <person name="Till S."/>
            <person name="Granat S."/>
            <person name="Shohdy N."/>
            <person name="Hasegawa A."/>
            <person name="Hameed A."/>
            <person name="Lodhi M."/>
            <person name="Johnson A."/>
            <person name="Chen E."/>
            <person name="Marra M.A."/>
            <person name="Martienssen R."/>
            <person name="McCombie W.R."/>
        </authorList>
    </citation>
    <scope>NUCLEOTIDE SEQUENCE [LARGE SCALE GENOMIC DNA]</scope>
    <source>
        <strain>cv. Columbia</strain>
    </source>
</reference>
<reference key="2">
    <citation type="journal article" date="2017" name="Plant J.">
        <title>Araport11: a complete reannotation of the Arabidopsis thaliana reference genome.</title>
        <authorList>
            <person name="Cheng C.Y."/>
            <person name="Krishnakumar V."/>
            <person name="Chan A.P."/>
            <person name="Thibaud-Nissen F."/>
            <person name="Schobel S."/>
            <person name="Town C.D."/>
        </authorList>
    </citation>
    <scope>GENOME REANNOTATION</scope>
    <source>
        <strain>cv. Columbia</strain>
    </source>
</reference>
<reference key="3">
    <citation type="journal article" date="2003" name="Science">
        <title>Empirical analysis of transcriptional activity in the Arabidopsis genome.</title>
        <authorList>
            <person name="Yamada K."/>
            <person name="Lim J."/>
            <person name="Dale J.M."/>
            <person name="Chen H."/>
            <person name="Shinn P."/>
            <person name="Palm C.J."/>
            <person name="Southwick A.M."/>
            <person name="Wu H.C."/>
            <person name="Kim C.J."/>
            <person name="Nguyen M."/>
            <person name="Pham P.K."/>
            <person name="Cheuk R.F."/>
            <person name="Karlin-Newmann G."/>
            <person name="Liu S.X."/>
            <person name="Lam B."/>
            <person name="Sakano H."/>
            <person name="Wu T."/>
            <person name="Yu G."/>
            <person name="Miranda M."/>
            <person name="Quach H.L."/>
            <person name="Tripp M."/>
            <person name="Chang C.H."/>
            <person name="Lee J.M."/>
            <person name="Toriumi M.J."/>
            <person name="Chan M.M."/>
            <person name="Tang C.C."/>
            <person name="Onodera C.S."/>
            <person name="Deng J.M."/>
            <person name="Akiyama K."/>
            <person name="Ansari Y."/>
            <person name="Arakawa T."/>
            <person name="Banh J."/>
            <person name="Banno F."/>
            <person name="Bowser L."/>
            <person name="Brooks S.Y."/>
            <person name="Carninci P."/>
            <person name="Chao Q."/>
            <person name="Choy N."/>
            <person name="Enju A."/>
            <person name="Goldsmith A.D."/>
            <person name="Gurjal M."/>
            <person name="Hansen N.F."/>
            <person name="Hayashizaki Y."/>
            <person name="Johnson-Hopson C."/>
            <person name="Hsuan V.W."/>
            <person name="Iida K."/>
            <person name="Karnes M."/>
            <person name="Khan S."/>
            <person name="Koesema E."/>
            <person name="Ishida J."/>
            <person name="Jiang P.X."/>
            <person name="Jones T."/>
            <person name="Kawai J."/>
            <person name="Kamiya A."/>
            <person name="Meyers C."/>
            <person name="Nakajima M."/>
            <person name="Narusaka M."/>
            <person name="Seki M."/>
            <person name="Sakurai T."/>
            <person name="Satou M."/>
            <person name="Tamse R."/>
            <person name="Vaysberg M."/>
            <person name="Wallender E.K."/>
            <person name="Wong C."/>
            <person name="Yamamura Y."/>
            <person name="Yuan S."/>
            <person name="Shinozaki K."/>
            <person name="Davis R.W."/>
            <person name="Theologis A."/>
            <person name="Ecker J.R."/>
        </authorList>
    </citation>
    <scope>NUCLEOTIDE SEQUENCE [LARGE SCALE MRNA]</scope>
    <source>
        <strain>cv. Columbia</strain>
    </source>
</reference>
<reference key="4">
    <citation type="journal article" date="2010" name="BMC Genomics">
        <title>Genome-wide cloning and sequence analysis of leucine-rich repeat receptor-like protein kinase genes in Arabidopsis thaliana.</title>
        <authorList>
            <person name="Gou X."/>
            <person name="He K."/>
            <person name="Yang H."/>
            <person name="Yuan T."/>
            <person name="Lin H."/>
            <person name="Clouse S.D."/>
            <person name="Li J."/>
        </authorList>
    </citation>
    <scope>NUCLEOTIDE SEQUENCE [LARGE SCALE MRNA]</scope>
    <source>
        <strain>cv. Columbia</strain>
    </source>
</reference>
<evidence type="ECO:0000250" key="1">
    <source>
        <dbReference type="UniProtKB" id="Q94AG2"/>
    </source>
</evidence>
<evidence type="ECO:0000250" key="2">
    <source>
        <dbReference type="UniProtKB" id="Q94F62"/>
    </source>
</evidence>
<evidence type="ECO:0000250" key="3">
    <source>
        <dbReference type="UniProtKB" id="Q9LSI9"/>
    </source>
</evidence>
<evidence type="ECO:0000255" key="4"/>
<evidence type="ECO:0000255" key="5">
    <source>
        <dbReference type="PROSITE-ProRule" id="PRU00159"/>
    </source>
</evidence>
<evidence type="ECO:0000255" key="6">
    <source>
        <dbReference type="PROSITE-ProRule" id="PRU10027"/>
    </source>
</evidence>
<evidence type="ECO:0000305" key="7"/>
<name>Y4052_ARATH</name>
<proteinExistence type="evidence at protein level"/>
<protein>
    <recommendedName>
        <fullName>Probable LRR receptor-like serine/threonine-protein kinase At4g30520</fullName>
        <ecNumber>2.7.11.1</ecNumber>
    </recommendedName>
</protein>
<keyword id="KW-0067">ATP-binding</keyword>
<keyword id="KW-1003">Cell membrane</keyword>
<keyword id="KW-0325">Glycoprotein</keyword>
<keyword id="KW-0418">Kinase</keyword>
<keyword id="KW-0433">Leucine-rich repeat</keyword>
<keyword id="KW-0472">Membrane</keyword>
<keyword id="KW-0547">Nucleotide-binding</keyword>
<keyword id="KW-0597">Phosphoprotein</keyword>
<keyword id="KW-0675">Receptor</keyword>
<keyword id="KW-1185">Reference proteome</keyword>
<keyword id="KW-0677">Repeat</keyword>
<keyword id="KW-0723">Serine/threonine-protein kinase</keyword>
<keyword id="KW-0732">Signal</keyword>
<keyword id="KW-0808">Transferase</keyword>
<keyword id="KW-0812">Transmembrane</keyword>
<keyword id="KW-1133">Transmembrane helix</keyword>
<organism>
    <name type="scientific">Arabidopsis thaliana</name>
    <name type="common">Mouse-ear cress</name>
    <dbReference type="NCBI Taxonomy" id="3702"/>
    <lineage>
        <taxon>Eukaryota</taxon>
        <taxon>Viridiplantae</taxon>
        <taxon>Streptophyta</taxon>
        <taxon>Embryophyta</taxon>
        <taxon>Tracheophyta</taxon>
        <taxon>Spermatophyta</taxon>
        <taxon>Magnoliopsida</taxon>
        <taxon>eudicotyledons</taxon>
        <taxon>Gunneridae</taxon>
        <taxon>Pentapetalae</taxon>
        <taxon>rosids</taxon>
        <taxon>malvids</taxon>
        <taxon>Brassicales</taxon>
        <taxon>Brassicaceae</taxon>
        <taxon>Camelineae</taxon>
        <taxon>Arabidopsis</taxon>
    </lineage>
</organism>
<accession>Q8VYT3</accession>
<accession>Q9M0A8</accession>
<dbReference type="EC" id="2.7.11.1"/>
<dbReference type="EMBL" id="AL161577">
    <property type="protein sequence ID" value="CAB79770.1"/>
    <property type="status" value="ALT_SEQ"/>
    <property type="molecule type" value="Genomic_DNA"/>
</dbReference>
<dbReference type="EMBL" id="CP002687">
    <property type="protein sequence ID" value="AEE85776.1"/>
    <property type="molecule type" value="Genomic_DNA"/>
</dbReference>
<dbReference type="EMBL" id="AY070043">
    <property type="protein sequence ID" value="AAL49800.1"/>
    <property type="molecule type" value="mRNA"/>
</dbReference>
<dbReference type="EMBL" id="AY096538">
    <property type="protein sequence ID" value="AAM20188.1"/>
    <property type="molecule type" value="mRNA"/>
</dbReference>
<dbReference type="EMBL" id="FJ708760">
    <property type="protein sequence ID" value="ACN59353.1"/>
    <property type="molecule type" value="mRNA"/>
</dbReference>
<dbReference type="PIR" id="A85357">
    <property type="entry name" value="A85357"/>
</dbReference>
<dbReference type="SMR" id="Q8VYT3"/>
<dbReference type="BioGRID" id="14462">
    <property type="interactions" value="64"/>
</dbReference>
<dbReference type="FunCoup" id="Q8VYT3">
    <property type="interactions" value="474"/>
</dbReference>
<dbReference type="IntAct" id="Q8VYT3">
    <property type="interactions" value="82"/>
</dbReference>
<dbReference type="STRING" id="3702.Q8VYT3"/>
<dbReference type="GlyGen" id="Q8VYT3">
    <property type="glycosylation" value="4 sites"/>
</dbReference>
<dbReference type="iPTMnet" id="Q8VYT3"/>
<dbReference type="PaxDb" id="3702-AT4G30520.1"/>
<dbReference type="ProteomicsDB" id="242874"/>
<dbReference type="EnsemblPlants" id="AT4G30520.1">
    <property type="protein sequence ID" value="AT4G30520.1"/>
    <property type="gene ID" value="AT4G30520"/>
</dbReference>
<dbReference type="GeneID" id="829175"/>
<dbReference type="Gramene" id="AT4G30520.1">
    <property type="protein sequence ID" value="AT4G30520.1"/>
    <property type="gene ID" value="AT4G30520"/>
</dbReference>
<dbReference type="KEGG" id="ath:AT4G30520"/>
<dbReference type="Araport" id="AT4G30520"/>
<dbReference type="TAIR" id="AT4G30520">
    <property type="gene designation" value="SARK"/>
</dbReference>
<dbReference type="eggNOG" id="ENOG502QQXY">
    <property type="taxonomic scope" value="Eukaryota"/>
</dbReference>
<dbReference type="HOGENOM" id="CLU_000288_92_6_1"/>
<dbReference type="InParanoid" id="Q8VYT3"/>
<dbReference type="OMA" id="FFCWYRK"/>
<dbReference type="PhylomeDB" id="Q8VYT3"/>
<dbReference type="PRO" id="PR:Q8VYT3"/>
<dbReference type="Proteomes" id="UP000006548">
    <property type="component" value="Chromosome 4"/>
</dbReference>
<dbReference type="ExpressionAtlas" id="Q8VYT3">
    <property type="expression patterns" value="baseline and differential"/>
</dbReference>
<dbReference type="GO" id="GO:0005886">
    <property type="term" value="C:plasma membrane"/>
    <property type="evidence" value="ECO:0007669"/>
    <property type="project" value="UniProtKB-SubCell"/>
</dbReference>
<dbReference type="GO" id="GO:0005524">
    <property type="term" value="F:ATP binding"/>
    <property type="evidence" value="ECO:0007669"/>
    <property type="project" value="UniProtKB-KW"/>
</dbReference>
<dbReference type="GO" id="GO:0015026">
    <property type="term" value="F:coreceptor activity"/>
    <property type="evidence" value="ECO:0000316"/>
    <property type="project" value="TAIR"/>
</dbReference>
<dbReference type="GO" id="GO:0042802">
    <property type="term" value="F:identical protein binding"/>
    <property type="evidence" value="ECO:0000353"/>
    <property type="project" value="IntAct"/>
</dbReference>
<dbReference type="GO" id="GO:0106310">
    <property type="term" value="F:protein serine kinase activity"/>
    <property type="evidence" value="ECO:0007669"/>
    <property type="project" value="RHEA"/>
</dbReference>
<dbReference type="GO" id="GO:0004674">
    <property type="term" value="F:protein serine/threonine kinase activity"/>
    <property type="evidence" value="ECO:0000314"/>
    <property type="project" value="TAIR"/>
</dbReference>
<dbReference type="GO" id="GO:0004713">
    <property type="term" value="F:protein tyrosine kinase activity"/>
    <property type="evidence" value="ECO:0000314"/>
    <property type="project" value="TAIR"/>
</dbReference>
<dbReference type="GO" id="GO:0048653">
    <property type="term" value="P:anther development"/>
    <property type="evidence" value="ECO:0000316"/>
    <property type="project" value="TAIR"/>
</dbReference>
<dbReference type="GO" id="GO:0007639">
    <property type="term" value="P:homeostasis of number of meristem cells"/>
    <property type="evidence" value="ECO:0000316"/>
    <property type="project" value="TAIR"/>
</dbReference>
<dbReference type="GO" id="GO:0010150">
    <property type="term" value="P:leaf senescence"/>
    <property type="evidence" value="ECO:0000315"/>
    <property type="project" value="TAIR"/>
</dbReference>
<dbReference type="FunFam" id="3.80.10.10:FF:000021">
    <property type="entry name" value="Putative LRR receptor-like serine/threonine-protein kinase"/>
    <property type="match status" value="1"/>
</dbReference>
<dbReference type="FunFam" id="3.30.200.20:FF:000015">
    <property type="entry name" value="Somatic embryogenesis receptor kinase 1"/>
    <property type="match status" value="1"/>
</dbReference>
<dbReference type="FunFam" id="1.10.510.10:FF:000016">
    <property type="entry name" value="Somatic embryogenesis receptor-like kinase 1"/>
    <property type="match status" value="1"/>
</dbReference>
<dbReference type="Gene3D" id="3.30.200.20">
    <property type="entry name" value="Phosphorylase Kinase, domain 1"/>
    <property type="match status" value="1"/>
</dbReference>
<dbReference type="Gene3D" id="3.80.10.10">
    <property type="entry name" value="Ribonuclease Inhibitor"/>
    <property type="match status" value="1"/>
</dbReference>
<dbReference type="Gene3D" id="1.10.510.10">
    <property type="entry name" value="Transferase(Phosphotransferase) domain 1"/>
    <property type="match status" value="1"/>
</dbReference>
<dbReference type="InterPro" id="IPR011009">
    <property type="entry name" value="Kinase-like_dom_sf"/>
</dbReference>
<dbReference type="InterPro" id="IPR001611">
    <property type="entry name" value="Leu-rich_rpt"/>
</dbReference>
<dbReference type="InterPro" id="IPR032675">
    <property type="entry name" value="LRR_dom_sf"/>
</dbReference>
<dbReference type="InterPro" id="IPR013210">
    <property type="entry name" value="LRR_N_plant-typ"/>
</dbReference>
<dbReference type="InterPro" id="IPR000719">
    <property type="entry name" value="Prot_kinase_dom"/>
</dbReference>
<dbReference type="InterPro" id="IPR017441">
    <property type="entry name" value="Protein_kinase_ATP_BS"/>
</dbReference>
<dbReference type="InterPro" id="IPR001245">
    <property type="entry name" value="Ser-Thr/Tyr_kinase_cat_dom"/>
</dbReference>
<dbReference type="InterPro" id="IPR008271">
    <property type="entry name" value="Ser/Thr_kinase_AS"/>
</dbReference>
<dbReference type="PANTHER" id="PTHR47988">
    <property type="entry name" value="SOMATIC EMBRYOGENESIS RECEPTOR KINASE 1"/>
    <property type="match status" value="1"/>
</dbReference>
<dbReference type="Pfam" id="PF00560">
    <property type="entry name" value="LRR_1"/>
    <property type="match status" value="1"/>
</dbReference>
<dbReference type="Pfam" id="PF13855">
    <property type="entry name" value="LRR_8"/>
    <property type="match status" value="1"/>
</dbReference>
<dbReference type="Pfam" id="PF08263">
    <property type="entry name" value="LRRNT_2"/>
    <property type="match status" value="1"/>
</dbReference>
<dbReference type="Pfam" id="PF07714">
    <property type="entry name" value="PK_Tyr_Ser-Thr"/>
    <property type="match status" value="1"/>
</dbReference>
<dbReference type="PRINTS" id="PR00019">
    <property type="entry name" value="LEURICHRPT"/>
</dbReference>
<dbReference type="SMART" id="SM00220">
    <property type="entry name" value="S_TKc"/>
    <property type="match status" value="1"/>
</dbReference>
<dbReference type="SUPFAM" id="SSF52058">
    <property type="entry name" value="L domain-like"/>
    <property type="match status" value="1"/>
</dbReference>
<dbReference type="SUPFAM" id="SSF56112">
    <property type="entry name" value="Protein kinase-like (PK-like)"/>
    <property type="match status" value="1"/>
</dbReference>
<dbReference type="PROSITE" id="PS51450">
    <property type="entry name" value="LRR"/>
    <property type="match status" value="5"/>
</dbReference>
<dbReference type="PROSITE" id="PS00107">
    <property type="entry name" value="PROTEIN_KINASE_ATP"/>
    <property type="match status" value="1"/>
</dbReference>
<dbReference type="PROSITE" id="PS50011">
    <property type="entry name" value="PROTEIN_KINASE_DOM"/>
    <property type="match status" value="1"/>
</dbReference>
<dbReference type="PROSITE" id="PS00108">
    <property type="entry name" value="PROTEIN_KINASE_ST"/>
    <property type="match status" value="1"/>
</dbReference>
<gene>
    <name type="ordered locus">At4g30520</name>
    <name type="ORF">F17I23_140</name>
</gene>
<sequence>MVVVTKKTMKIQIHLLYSFLFLCFSTLTLSSEPRNPEVEALISIRNNLHDPHGALNNWDEFSVDPCSWAMITCSPDNLVIGLGAPSQSLSGGLSESIGNLTNLRQVSLQNNNISGKIPPELGFLPKLQTLDLSNNRFSGDIPVSIDQLSSLQYLRLNNNSLSGPFPASLSQIPHLSFLDLSYNNLSGPVPKFPARTFNVAGNPLICRSNPPEICSGSINASPLSVSLSSSSGRRSNRLAIALSVSLGSVVILVLALGSFCWYRKKQRRLLILNLNDKQEEGLQGLGNLRSFTFRELHVYTDGFSSKNILGAGGFGNVYRGKLGDGTMVAVKRLKDINGTSGDSQFRMELEMISLAVHKNLLRLIGYCATSGERLLVYPYMPNGSVASKLKSKPALDWNMRKRIAIGAARGLLYLHEQCDPKIIHRDVKAANILLDECFEAVVGDFGLAKLLNHADSHVTTAVRGTVGHIAPEYLSTGQSSEKTDVFGFGILLLELITGLRALEFGKTVSQKGAMLEWVRKLHEEMKVEELLDRELGTNYDKIEVGEMLQVALLCTQYLPAHRPKMSEVVLMLEGDGLAERWAASHNHSHFYHANISFKTISSLSTTSVSRLDAHCNDPTYQMFGSSAFDDDDDHQPLDSFAMELSGPR</sequence>
<feature type="signal peptide" evidence="4">
    <location>
        <begin position="1"/>
        <end position="30"/>
    </location>
</feature>
<feature type="chain" id="PRO_0000409728" description="Probable LRR receptor-like serine/threonine-protein kinase At4g30520">
    <location>
        <begin position="31"/>
        <end position="648"/>
    </location>
</feature>
<feature type="topological domain" description="Extracellular" evidence="4">
    <location>
        <begin position="31"/>
        <end position="238"/>
    </location>
</feature>
<feature type="transmembrane region" description="Helical" evidence="4">
    <location>
        <begin position="239"/>
        <end position="259"/>
    </location>
</feature>
<feature type="topological domain" description="Cytoplasmic" evidence="4">
    <location>
        <begin position="260"/>
        <end position="648"/>
    </location>
</feature>
<feature type="repeat" description="LRR 1">
    <location>
        <begin position="100"/>
        <end position="125"/>
    </location>
</feature>
<feature type="repeat" description="LRR 2">
    <location>
        <begin position="127"/>
        <end position="148"/>
    </location>
</feature>
<feature type="repeat" description="LRR 3">
    <location>
        <begin position="149"/>
        <end position="172"/>
    </location>
</feature>
<feature type="repeat" description="LRR 4">
    <location>
        <begin position="174"/>
        <end position="199"/>
    </location>
</feature>
<feature type="domain" description="Protein kinase" evidence="5">
    <location>
        <begin position="303"/>
        <end position="582"/>
    </location>
</feature>
<feature type="active site" description="Proton acceptor" evidence="5 6">
    <location>
        <position position="426"/>
    </location>
</feature>
<feature type="binding site" evidence="5">
    <location>
        <begin position="309"/>
        <end position="317"/>
    </location>
    <ligand>
        <name>ATP</name>
        <dbReference type="ChEBI" id="CHEBI:30616"/>
    </ligand>
</feature>
<feature type="binding site" evidence="5">
    <location>
        <position position="331"/>
    </location>
    <ligand>
        <name>ATP</name>
        <dbReference type="ChEBI" id="CHEBI:30616"/>
    </ligand>
</feature>
<feature type="modified residue" description="Phosphothreonine" evidence="3">
    <location>
        <position position="300"/>
    </location>
</feature>
<feature type="modified residue" description="Phosphothreonine" evidence="2">
    <location>
        <position position="326"/>
    </location>
</feature>
<feature type="modified residue" description="Phosphoserine" evidence="1">
    <location>
        <position position="384"/>
    </location>
</feature>
<feature type="modified residue" description="Phosphoserine" evidence="3">
    <location>
        <position position="387"/>
    </location>
</feature>
<feature type="modified residue" description="Phosphothreonine" evidence="2">
    <location>
        <position position="459"/>
    </location>
</feature>
<feature type="modified residue" description="Phosphothreonine" evidence="2">
    <location>
        <position position="460"/>
    </location>
</feature>
<feature type="modified residue" description="Phosphothreonine" evidence="2">
    <location>
        <position position="465"/>
    </location>
</feature>
<feature type="modified residue" description="Phosphotyrosine" evidence="1">
    <location>
        <position position="473"/>
    </location>
</feature>
<feature type="modified residue" description="Phosphoserine" evidence="1">
    <location>
        <position position="475"/>
    </location>
</feature>
<feature type="modified residue" description="Phosphothreonine" evidence="1">
    <location>
        <position position="476"/>
    </location>
</feature>
<feature type="modified residue" description="Phosphoserine" evidence="1">
    <location>
        <position position="480"/>
    </location>
</feature>
<feature type="modified residue" description="Phosphothreonine" evidence="1">
    <location>
        <position position="555"/>
    </location>
</feature>
<feature type="glycosylation site" description="N-linked (GlcNAc...) asparagine" evidence="4">
    <location>
        <position position="99"/>
    </location>
</feature>
<feature type="glycosylation site" description="N-linked (GlcNAc...) asparagine" evidence="4">
    <location>
        <position position="112"/>
    </location>
</feature>
<feature type="glycosylation site" description="N-linked (GlcNAc...) asparagine" evidence="4">
    <location>
        <position position="158"/>
    </location>
</feature>
<feature type="glycosylation site" description="N-linked (GlcNAc...) asparagine" evidence="4">
    <location>
        <position position="184"/>
    </location>
</feature>
<comment type="catalytic activity">
    <reaction>
        <text>L-seryl-[protein] + ATP = O-phospho-L-seryl-[protein] + ADP + H(+)</text>
        <dbReference type="Rhea" id="RHEA:17989"/>
        <dbReference type="Rhea" id="RHEA-COMP:9863"/>
        <dbReference type="Rhea" id="RHEA-COMP:11604"/>
        <dbReference type="ChEBI" id="CHEBI:15378"/>
        <dbReference type="ChEBI" id="CHEBI:29999"/>
        <dbReference type="ChEBI" id="CHEBI:30616"/>
        <dbReference type="ChEBI" id="CHEBI:83421"/>
        <dbReference type="ChEBI" id="CHEBI:456216"/>
        <dbReference type="EC" id="2.7.11.1"/>
    </reaction>
</comment>
<comment type="catalytic activity">
    <reaction>
        <text>L-threonyl-[protein] + ATP = O-phospho-L-threonyl-[protein] + ADP + H(+)</text>
        <dbReference type="Rhea" id="RHEA:46608"/>
        <dbReference type="Rhea" id="RHEA-COMP:11060"/>
        <dbReference type="Rhea" id="RHEA-COMP:11605"/>
        <dbReference type="ChEBI" id="CHEBI:15378"/>
        <dbReference type="ChEBI" id="CHEBI:30013"/>
        <dbReference type="ChEBI" id="CHEBI:30616"/>
        <dbReference type="ChEBI" id="CHEBI:61977"/>
        <dbReference type="ChEBI" id="CHEBI:456216"/>
        <dbReference type="EC" id="2.7.11.1"/>
    </reaction>
</comment>
<comment type="interaction">
    <interactant intactId="EBI-16902452">
        <id>Q8VYT3</id>
    </interactant>
    <interactant intactId="EBI-1238687">
        <id>O04567</id>
        <label>At1g27190</label>
    </interactant>
    <organismsDiffer>false</organismsDiffer>
    <experiments>2</experiments>
</comment>
<comment type="interaction">
    <interactant intactId="EBI-16902452">
        <id>Q8VYT3</id>
    </interactant>
    <interactant intactId="EBI-20651225">
        <id>C0LGI5</id>
        <label>At1g69990</label>
    </interactant>
    <organismsDiffer>false</organismsDiffer>
    <experiments>2</experiments>
</comment>
<comment type="interaction">
    <interactant intactId="EBI-16902452">
        <id>Q8VYT3</id>
    </interactant>
    <interactant intactId="EBI-20651957">
        <id>Q9ZQR3</id>
        <label>At2g14510</label>
    </interactant>
    <organismsDiffer>false</organismsDiffer>
    <experiments>2</experiments>
</comment>
<comment type="interaction">
    <interactant intactId="EBI-16902452">
        <id>Q8VYT3</id>
    </interactant>
    <interactant intactId="EBI-16902452">
        <id>Q8VYT3</id>
        <label>At4g30520</label>
    </interactant>
    <organismsDiffer>false</organismsDiffer>
    <experiments>2</experiments>
</comment>
<comment type="interaction">
    <interactant intactId="EBI-16902452">
        <id>Q8VYT3</id>
    </interactant>
    <interactant intactId="EBI-6298290">
        <id>Q9ASS4</id>
        <label>At5g48380</label>
    </interactant>
    <organismsDiffer>false</organismsDiffer>
    <experiments>2</experiments>
</comment>
<comment type="interaction">
    <interactant intactId="EBI-16902452">
        <id>Q8VYT3</id>
    </interactant>
    <interactant intactId="EBI-617138">
        <id>Q94F62</id>
        <label>BAK1</label>
    </interactant>
    <organismsDiffer>false</organismsDiffer>
    <experiments>2</experiments>
</comment>
<comment type="interaction">
    <interactant intactId="EBI-16902452">
        <id>Q8VYT3</id>
    </interactant>
    <interactant intactId="EBI-590903">
        <id>Q9ZWC8</id>
        <label>BRL1</label>
    </interactant>
    <organismsDiffer>false</organismsDiffer>
    <experiments>2</experiments>
</comment>
<comment type="interaction">
    <interactant intactId="EBI-16902452">
        <id>Q8VYT3</id>
    </interactant>
    <interactant intactId="EBI-20651413">
        <id>Q9LJF3</id>
        <label>BRL3</label>
    </interactant>
    <organismsDiffer>false</organismsDiffer>
    <experiments>2</experiments>
</comment>
<comment type="interaction">
    <interactant intactId="EBI-16902452">
        <id>Q8VYT3</id>
    </interactant>
    <interactant intactId="EBI-8801168">
        <id>C0LGT6</id>
        <label>EFR</label>
    </interactant>
    <organismsDiffer>false</organismsDiffer>
    <experiments>2</experiments>
</comment>
<comment type="interaction">
    <interactant intactId="EBI-16902452">
        <id>Q8VYT3</id>
    </interactant>
    <interactant intactId="EBI-16914248">
        <id>C0LGW6</id>
        <label>ERL1</label>
    </interactant>
    <organismsDiffer>false</organismsDiffer>
    <experiments>3</experiments>
</comment>
<comment type="interaction">
    <interactant intactId="EBI-16902452">
        <id>Q8VYT3</id>
    </interactant>
    <interactant intactId="EBI-16895926">
        <id>Q6XAT2</id>
        <label>ERL2</label>
    </interactant>
    <organismsDiffer>false</organismsDiffer>
    <experiments>3</experiments>
</comment>
<comment type="interaction">
    <interactant intactId="EBI-16902452">
        <id>Q8VYT3</id>
    </interactant>
    <interactant intactId="EBI-16905069">
        <id>C0LGQ5</id>
        <label>GSO1</label>
    </interactant>
    <organismsDiffer>false</organismsDiffer>
    <experiments>2</experiments>
</comment>
<comment type="interaction">
    <interactant intactId="EBI-16902452">
        <id>Q8VYT3</id>
    </interactant>
    <interactant intactId="EBI-16904927">
        <id>C0LGX3</id>
        <label>HSL2</label>
    </interactant>
    <organismsDiffer>false</organismsDiffer>
    <experiments>2</experiments>
</comment>
<comment type="interaction">
    <interactant intactId="EBI-16902452">
        <id>Q8VYT3</id>
    </interactant>
    <interactant intactId="EBI-16924837">
        <id>Q9C8I6</id>
        <label>IOS1</label>
    </interactant>
    <organismsDiffer>false</organismsDiffer>
    <experiments>3</experiments>
</comment>
<comment type="interaction">
    <interactant intactId="EBI-16902452">
        <id>Q8VYT3</id>
    </interactant>
    <interactant intactId="EBI-20651739">
        <id>Q9ZVD4</id>
        <label>LRR-RLK</label>
    </interactant>
    <organismsDiffer>false</organismsDiffer>
    <experiments>2</experiments>
</comment>
<comment type="interaction">
    <interactant intactId="EBI-16902452">
        <id>Q8VYT3</id>
    </interactant>
    <interactant intactId="EBI-16146189">
        <id>Q9LFS4</id>
        <label>NIK1</label>
    </interactant>
    <organismsDiffer>false</organismsDiffer>
    <experiments>4</experiments>
</comment>
<comment type="interaction">
    <interactant intactId="EBI-16902452">
        <id>Q8VYT3</id>
    </interactant>
    <interactant intactId="EBI-16904988">
        <id>Q9C7S5</id>
        <label>PSY1R</label>
    </interactant>
    <organismsDiffer>false</organismsDiffer>
    <experiments>2</experiments>
</comment>
<comment type="interaction">
    <interactant intactId="EBI-16902452">
        <id>Q8VYT3</id>
    </interactant>
    <interactant intactId="EBI-1238953">
        <id>Q9ZRF9</id>
        <label>RPK1</label>
    </interactant>
    <organismsDiffer>false</organismsDiffer>
    <experiments>4</experiments>
</comment>
<comment type="interaction">
    <interactant intactId="EBI-16902452">
        <id>Q8VYT3</id>
    </interactant>
    <interactant intactId="EBI-1555537">
        <id>Q94AG2</id>
        <label>SERK1</label>
    </interactant>
    <organismsDiffer>false</organismsDiffer>
    <experiments>2</experiments>
</comment>
<comment type="interaction">
    <interactant intactId="EBI-16902452">
        <id>Q8VYT3</id>
    </interactant>
    <interactant intactId="EBI-6290483">
        <id>Q9SKG5</id>
        <label>SERK4</label>
    </interactant>
    <organismsDiffer>false</organismsDiffer>
    <experiments>2</experiments>
</comment>
<comment type="interaction">
    <interactant intactId="EBI-16902452">
        <id>Q8VYT3</id>
    </interactant>
    <interactant intactId="EBI-16955365">
        <id>Q9FG24</id>
        <label>SRF2</label>
    </interactant>
    <organismsDiffer>false</organismsDiffer>
    <experiments>2</experiments>
</comment>
<comment type="interaction">
    <interactant intactId="EBI-16902452">
        <id>Q8VYT3</id>
    </interactant>
    <interactant intactId="EBI-16954301">
        <id>Q9C8M9</id>
        <label>SRF6</label>
    </interactant>
    <organismsDiffer>false</organismsDiffer>
    <experiments>2</experiments>
</comment>
<comment type="interaction">
    <interactant intactId="EBI-16902452">
        <id>Q8VYT3</id>
    </interactant>
    <interactant intactId="EBI-16941202">
        <id>Q6R2J8</id>
        <label>SRF8</label>
    </interactant>
    <organismsDiffer>false</organismsDiffer>
    <experiments>2</experiments>
</comment>
<comment type="interaction">
    <interactant intactId="EBI-16902452">
        <id>Q8VYT3</id>
    </interactant>
    <interactant intactId="EBI-17072125">
        <id>Q8RWZ1</id>
        <label>SUB</label>
    </interactant>
    <organismsDiffer>false</organismsDiffer>
    <experiments>2</experiments>
</comment>
<comment type="subcellular location">
    <subcellularLocation>
        <location>Cell membrane</location>
        <topology>Single-pass type I membrane protein</topology>
    </subcellularLocation>
</comment>
<comment type="similarity">
    <text evidence="5">Belongs to the protein kinase superfamily. Ser/Thr protein kinase family.</text>
</comment>
<comment type="sequence caution" evidence="7">
    <conflict type="erroneous gene model prediction">
        <sequence resource="EMBL-CDS" id="CAB79770"/>
    </conflict>
</comment>